<sequence>MPDTVCRPPRLILASSSRYRRALLERLGIPFDVVSPDLDETPHDGETPAATALRLAAAKARAVAATIDAPDGVLVIGSDQVATFDGLQIGKPGTHERALAQLVSMQGREVEFHSALCLYDSRTGEAQVEDIVTHVRFRSLPEAELDAYLRAETPYDVAGSAKSEGLGIALLDAIDSNDPTALVGLPLIALTRMLRAADYPLFATTRGDRA</sequence>
<keyword id="KW-0963">Cytoplasm</keyword>
<keyword id="KW-0378">Hydrolase</keyword>
<keyword id="KW-0546">Nucleotide metabolism</keyword>
<gene>
    <name type="ordered locus">Bcep18194_A4229</name>
</gene>
<reference key="1">
    <citation type="submission" date="2005-10" db="EMBL/GenBank/DDBJ databases">
        <title>Complete sequence of chromosome 1 of Burkholderia sp. 383.</title>
        <authorList>
            <consortium name="US DOE Joint Genome Institute"/>
            <person name="Copeland A."/>
            <person name="Lucas S."/>
            <person name="Lapidus A."/>
            <person name="Barry K."/>
            <person name="Detter J.C."/>
            <person name="Glavina T."/>
            <person name="Hammon N."/>
            <person name="Israni S."/>
            <person name="Pitluck S."/>
            <person name="Chain P."/>
            <person name="Malfatti S."/>
            <person name="Shin M."/>
            <person name="Vergez L."/>
            <person name="Schmutz J."/>
            <person name="Larimer F."/>
            <person name="Land M."/>
            <person name="Kyrpides N."/>
            <person name="Lykidis A."/>
            <person name="Richardson P."/>
        </authorList>
    </citation>
    <scope>NUCLEOTIDE SEQUENCE [LARGE SCALE GENOMIC DNA]</scope>
    <source>
        <strain>ATCC 17760 / DSM 23089 / LMG 22485 / NCIMB 9086 / R18194 / 383</strain>
    </source>
</reference>
<comment type="function">
    <text evidence="1">Nucleoside triphosphate pyrophosphatase that hydrolyzes 7-methyl-GTP (m(7)GTP). May have a dual role in cell division arrest and in preventing the incorporation of modified nucleotides into cellular nucleic acids.</text>
</comment>
<comment type="catalytic activity">
    <reaction evidence="1">
        <text>N(7)-methyl-GTP + H2O = N(7)-methyl-GMP + diphosphate + H(+)</text>
        <dbReference type="Rhea" id="RHEA:58744"/>
        <dbReference type="ChEBI" id="CHEBI:15377"/>
        <dbReference type="ChEBI" id="CHEBI:15378"/>
        <dbReference type="ChEBI" id="CHEBI:33019"/>
        <dbReference type="ChEBI" id="CHEBI:58285"/>
        <dbReference type="ChEBI" id="CHEBI:87133"/>
    </reaction>
</comment>
<comment type="cofactor">
    <cofactor evidence="1">
        <name>a divalent metal cation</name>
        <dbReference type="ChEBI" id="CHEBI:60240"/>
    </cofactor>
</comment>
<comment type="subcellular location">
    <subcellularLocation>
        <location evidence="1">Cytoplasm</location>
    </subcellularLocation>
</comment>
<comment type="similarity">
    <text evidence="1">Belongs to the Maf family. YceF subfamily.</text>
</comment>
<accession>Q39I90</accession>
<evidence type="ECO:0000255" key="1">
    <source>
        <dbReference type="HAMAP-Rule" id="MF_00528"/>
    </source>
</evidence>
<organism>
    <name type="scientific">Burkholderia lata (strain ATCC 17760 / DSM 23089 / LMG 22485 / NCIMB 9086 / R18194 / 383)</name>
    <dbReference type="NCBI Taxonomy" id="482957"/>
    <lineage>
        <taxon>Bacteria</taxon>
        <taxon>Pseudomonadati</taxon>
        <taxon>Pseudomonadota</taxon>
        <taxon>Betaproteobacteria</taxon>
        <taxon>Burkholderiales</taxon>
        <taxon>Burkholderiaceae</taxon>
        <taxon>Burkholderia</taxon>
        <taxon>Burkholderia cepacia complex</taxon>
    </lineage>
</organism>
<proteinExistence type="inferred from homology"/>
<feature type="chain" id="PRO_0000267271" description="7-methyl-GTP pyrophosphatase">
    <location>
        <begin position="1"/>
        <end position="210"/>
    </location>
</feature>
<feature type="active site" description="Proton acceptor" evidence="1">
    <location>
        <position position="79"/>
    </location>
</feature>
<feature type="site" description="Important for substrate specificity" evidence="1">
    <location>
        <position position="19"/>
    </location>
</feature>
<feature type="site" description="Important for substrate specificity" evidence="1">
    <location>
        <position position="80"/>
    </location>
</feature>
<feature type="site" description="Important for substrate specificity" evidence="1">
    <location>
        <position position="164"/>
    </location>
</feature>
<dbReference type="EC" id="3.6.1.-" evidence="1"/>
<dbReference type="EMBL" id="CP000151">
    <property type="protein sequence ID" value="ABB07826.1"/>
    <property type="molecule type" value="Genomic_DNA"/>
</dbReference>
<dbReference type="RefSeq" id="WP_011351400.1">
    <property type="nucleotide sequence ID" value="NC_007510.1"/>
</dbReference>
<dbReference type="SMR" id="Q39I90"/>
<dbReference type="GeneID" id="45094130"/>
<dbReference type="KEGG" id="bur:Bcep18194_A4229"/>
<dbReference type="PATRIC" id="fig|482957.22.peg.1120"/>
<dbReference type="HOGENOM" id="CLU_040416_1_0_4"/>
<dbReference type="Proteomes" id="UP000002705">
    <property type="component" value="Chromosome 1"/>
</dbReference>
<dbReference type="GO" id="GO:0005737">
    <property type="term" value="C:cytoplasm"/>
    <property type="evidence" value="ECO:0007669"/>
    <property type="project" value="UniProtKB-SubCell"/>
</dbReference>
<dbReference type="GO" id="GO:0047429">
    <property type="term" value="F:nucleoside triphosphate diphosphatase activity"/>
    <property type="evidence" value="ECO:0007669"/>
    <property type="project" value="InterPro"/>
</dbReference>
<dbReference type="GO" id="GO:0009117">
    <property type="term" value="P:nucleotide metabolic process"/>
    <property type="evidence" value="ECO:0007669"/>
    <property type="project" value="UniProtKB-KW"/>
</dbReference>
<dbReference type="CDD" id="cd00555">
    <property type="entry name" value="Maf"/>
    <property type="match status" value="1"/>
</dbReference>
<dbReference type="Gene3D" id="3.90.950.10">
    <property type="match status" value="1"/>
</dbReference>
<dbReference type="HAMAP" id="MF_00528">
    <property type="entry name" value="Maf"/>
    <property type="match status" value="1"/>
</dbReference>
<dbReference type="InterPro" id="IPR029001">
    <property type="entry name" value="ITPase-like_fam"/>
</dbReference>
<dbReference type="InterPro" id="IPR003697">
    <property type="entry name" value="Maf-like"/>
</dbReference>
<dbReference type="NCBIfam" id="TIGR00172">
    <property type="entry name" value="maf"/>
    <property type="match status" value="1"/>
</dbReference>
<dbReference type="PANTHER" id="PTHR43213">
    <property type="entry name" value="BIFUNCTIONAL DTTP/UTP PYROPHOSPHATASE/METHYLTRANSFERASE PROTEIN-RELATED"/>
    <property type="match status" value="1"/>
</dbReference>
<dbReference type="PANTHER" id="PTHR43213:SF5">
    <property type="entry name" value="BIFUNCTIONAL DTTP_UTP PYROPHOSPHATASE_METHYLTRANSFERASE PROTEIN-RELATED"/>
    <property type="match status" value="1"/>
</dbReference>
<dbReference type="Pfam" id="PF02545">
    <property type="entry name" value="Maf"/>
    <property type="match status" value="1"/>
</dbReference>
<dbReference type="PIRSF" id="PIRSF006305">
    <property type="entry name" value="Maf"/>
    <property type="match status" value="1"/>
</dbReference>
<dbReference type="SUPFAM" id="SSF52972">
    <property type="entry name" value="ITPase-like"/>
    <property type="match status" value="1"/>
</dbReference>
<protein>
    <recommendedName>
        <fullName evidence="1">7-methyl-GTP pyrophosphatase</fullName>
        <shortName evidence="1">m(7)GTP pyrophosphatase</shortName>
        <ecNumber evidence="1">3.6.1.-</ecNumber>
    </recommendedName>
</protein>
<name>NTPPB_BURL3</name>